<gene>
    <name type="ordered locus">Bcer98_3022</name>
</gene>
<dbReference type="EC" id="2.7.11.32" evidence="1"/>
<dbReference type="EC" id="2.7.4.27" evidence="1"/>
<dbReference type="EMBL" id="CP000764">
    <property type="protein sequence ID" value="ABS23249.1"/>
    <property type="molecule type" value="Genomic_DNA"/>
</dbReference>
<dbReference type="RefSeq" id="WP_012095486.1">
    <property type="nucleotide sequence ID" value="NC_009674.1"/>
</dbReference>
<dbReference type="SMR" id="A7GSZ1"/>
<dbReference type="STRING" id="315749.Bcer98_3022"/>
<dbReference type="GeneID" id="33898270"/>
<dbReference type="KEGG" id="bcy:Bcer98_3022"/>
<dbReference type="eggNOG" id="COG1806">
    <property type="taxonomic scope" value="Bacteria"/>
</dbReference>
<dbReference type="HOGENOM" id="CLU_046206_2_1_9"/>
<dbReference type="OrthoDB" id="9782201at2"/>
<dbReference type="Proteomes" id="UP000002300">
    <property type="component" value="Chromosome"/>
</dbReference>
<dbReference type="GO" id="GO:0043531">
    <property type="term" value="F:ADP binding"/>
    <property type="evidence" value="ECO:0007669"/>
    <property type="project" value="UniProtKB-UniRule"/>
</dbReference>
<dbReference type="GO" id="GO:0005524">
    <property type="term" value="F:ATP binding"/>
    <property type="evidence" value="ECO:0007669"/>
    <property type="project" value="InterPro"/>
</dbReference>
<dbReference type="GO" id="GO:0016776">
    <property type="term" value="F:phosphotransferase activity, phosphate group as acceptor"/>
    <property type="evidence" value="ECO:0007669"/>
    <property type="project" value="UniProtKB-UniRule"/>
</dbReference>
<dbReference type="GO" id="GO:0004674">
    <property type="term" value="F:protein serine/threonine kinase activity"/>
    <property type="evidence" value="ECO:0007669"/>
    <property type="project" value="UniProtKB-UniRule"/>
</dbReference>
<dbReference type="HAMAP" id="MF_00921">
    <property type="entry name" value="PDRP"/>
    <property type="match status" value="1"/>
</dbReference>
<dbReference type="InterPro" id="IPR005177">
    <property type="entry name" value="Kinase-pyrophosphorylase"/>
</dbReference>
<dbReference type="InterPro" id="IPR026565">
    <property type="entry name" value="PPDK_reg"/>
</dbReference>
<dbReference type="NCBIfam" id="NF003742">
    <property type="entry name" value="PRK05339.1"/>
    <property type="match status" value="1"/>
</dbReference>
<dbReference type="PANTHER" id="PTHR31756">
    <property type="entry name" value="PYRUVATE, PHOSPHATE DIKINASE REGULATORY PROTEIN 1, CHLOROPLASTIC"/>
    <property type="match status" value="1"/>
</dbReference>
<dbReference type="PANTHER" id="PTHR31756:SF3">
    <property type="entry name" value="PYRUVATE, PHOSPHATE DIKINASE REGULATORY PROTEIN 1, CHLOROPLASTIC"/>
    <property type="match status" value="1"/>
</dbReference>
<dbReference type="Pfam" id="PF03618">
    <property type="entry name" value="Kinase-PPPase"/>
    <property type="match status" value="1"/>
</dbReference>
<organism>
    <name type="scientific">Bacillus cytotoxicus (strain DSM 22905 / CIP 110041 / 391-98 / NVH 391-98)</name>
    <dbReference type="NCBI Taxonomy" id="315749"/>
    <lineage>
        <taxon>Bacteria</taxon>
        <taxon>Bacillati</taxon>
        <taxon>Bacillota</taxon>
        <taxon>Bacilli</taxon>
        <taxon>Bacillales</taxon>
        <taxon>Bacillaceae</taxon>
        <taxon>Bacillus</taxon>
        <taxon>Bacillus cereus group</taxon>
    </lineage>
</organism>
<reference key="1">
    <citation type="journal article" date="2008" name="Chem. Biol. Interact.">
        <title>Extending the Bacillus cereus group genomics to putative food-borne pathogens of different toxicity.</title>
        <authorList>
            <person name="Lapidus A."/>
            <person name="Goltsman E."/>
            <person name="Auger S."/>
            <person name="Galleron N."/>
            <person name="Segurens B."/>
            <person name="Dossat C."/>
            <person name="Land M.L."/>
            <person name="Broussolle V."/>
            <person name="Brillard J."/>
            <person name="Guinebretiere M.-H."/>
            <person name="Sanchis V."/>
            <person name="Nguen-the C."/>
            <person name="Lereclus D."/>
            <person name="Richardson P."/>
            <person name="Wincker P."/>
            <person name="Weissenbach J."/>
            <person name="Ehrlich S.D."/>
            <person name="Sorokin A."/>
        </authorList>
    </citation>
    <scope>NUCLEOTIDE SEQUENCE [LARGE SCALE GENOMIC DNA]</scope>
    <source>
        <strain>DSM 22905 / CIP 110041 / 391-98 / NVH 391-98</strain>
    </source>
</reference>
<accession>A7GSZ1</accession>
<comment type="function">
    <text evidence="1">Bifunctional serine/threonine kinase and phosphorylase involved in the regulation of the pyruvate, phosphate dikinase (PPDK) by catalyzing its phosphorylation/dephosphorylation.</text>
</comment>
<comment type="catalytic activity">
    <reaction evidence="1">
        <text>N(tele)-phospho-L-histidyl/L-threonyl-[pyruvate, phosphate dikinase] + ADP = N(tele)-phospho-L-histidyl/O-phospho-L-threonyl-[pyruvate, phosphate dikinase] + AMP + H(+)</text>
        <dbReference type="Rhea" id="RHEA:43692"/>
        <dbReference type="Rhea" id="RHEA-COMP:10650"/>
        <dbReference type="Rhea" id="RHEA-COMP:10651"/>
        <dbReference type="ChEBI" id="CHEBI:15378"/>
        <dbReference type="ChEBI" id="CHEBI:30013"/>
        <dbReference type="ChEBI" id="CHEBI:61977"/>
        <dbReference type="ChEBI" id="CHEBI:83586"/>
        <dbReference type="ChEBI" id="CHEBI:456215"/>
        <dbReference type="ChEBI" id="CHEBI:456216"/>
        <dbReference type="EC" id="2.7.11.32"/>
    </reaction>
</comment>
<comment type="catalytic activity">
    <reaction evidence="1">
        <text>N(tele)-phospho-L-histidyl/O-phospho-L-threonyl-[pyruvate, phosphate dikinase] + phosphate + H(+) = N(tele)-phospho-L-histidyl/L-threonyl-[pyruvate, phosphate dikinase] + diphosphate</text>
        <dbReference type="Rhea" id="RHEA:43696"/>
        <dbReference type="Rhea" id="RHEA-COMP:10650"/>
        <dbReference type="Rhea" id="RHEA-COMP:10651"/>
        <dbReference type="ChEBI" id="CHEBI:15378"/>
        <dbReference type="ChEBI" id="CHEBI:30013"/>
        <dbReference type="ChEBI" id="CHEBI:33019"/>
        <dbReference type="ChEBI" id="CHEBI:43474"/>
        <dbReference type="ChEBI" id="CHEBI:61977"/>
        <dbReference type="ChEBI" id="CHEBI:83586"/>
        <dbReference type="EC" id="2.7.4.27"/>
    </reaction>
</comment>
<comment type="similarity">
    <text evidence="1">Belongs to the pyruvate, phosphate/water dikinase regulatory protein family. PDRP subfamily.</text>
</comment>
<name>PDRP_BACCN</name>
<keyword id="KW-0418">Kinase</keyword>
<keyword id="KW-0547">Nucleotide-binding</keyword>
<keyword id="KW-0723">Serine/threonine-protein kinase</keyword>
<keyword id="KW-0808">Transferase</keyword>
<protein>
    <recommendedName>
        <fullName evidence="1">Putative pyruvate, phosphate dikinase regulatory protein</fullName>
        <shortName evidence="1">PPDK regulatory protein</shortName>
        <ecNumber evidence="1">2.7.11.32</ecNumber>
        <ecNumber evidence="1">2.7.4.27</ecNumber>
    </recommendedName>
</protein>
<proteinExistence type="inferred from homology"/>
<sequence>MDNKIVYVVSDSVGETADLVVRAAMGQFPFAPDIRRVPYVEDTGTLKEVISIAKSNRALICFTLVKPDMRQYLLTEAAKEGVEAYDIIGPLIDQIAEITRQVPRYEPGIVRKLDEEYFKKIEAIEFAVKYDDGRDARGILKADIVLIGVSRTSKTPLSQYLAHNKRLKVANVPLVPEVDPPEELYQVSKEKCFGLKINPEKLNHIRKERLKSLGLSDGATYANINRIKEEIDHFEKVINKINCQVIDVSNKAIEETANIIVNAVQNQRMF</sequence>
<evidence type="ECO:0000255" key="1">
    <source>
        <dbReference type="HAMAP-Rule" id="MF_00921"/>
    </source>
</evidence>
<feature type="chain" id="PRO_1000084462" description="Putative pyruvate, phosphate dikinase regulatory protein">
    <location>
        <begin position="1"/>
        <end position="270"/>
    </location>
</feature>
<feature type="binding site" evidence="1">
    <location>
        <begin position="148"/>
        <end position="155"/>
    </location>
    <ligand>
        <name>ADP</name>
        <dbReference type="ChEBI" id="CHEBI:456216"/>
    </ligand>
</feature>